<evidence type="ECO:0000256" key="1">
    <source>
        <dbReference type="SAM" id="MobiDB-lite"/>
    </source>
</evidence>
<evidence type="ECO:0000269" key="2">
    <source>
    </source>
</evidence>
<evidence type="ECO:0000269" key="3">
    <source>
    </source>
</evidence>
<evidence type="ECO:0000269" key="4">
    <source>
    </source>
</evidence>
<evidence type="ECO:0000269" key="5">
    <source>
    </source>
</evidence>
<evidence type="ECO:0000269" key="6">
    <source>
    </source>
</evidence>
<evidence type="ECO:0000269" key="7">
    <source>
    </source>
</evidence>
<evidence type="ECO:0000269" key="8">
    <source>
    </source>
</evidence>
<evidence type="ECO:0000303" key="9">
    <source ref="7"/>
</evidence>
<evidence type="ECO:0000305" key="10"/>
<name>L2GL_DROME</name>
<gene>
    <name type="primary">l(2)gl</name>
    <name type="ORF">CG2671</name>
</gene>
<reference key="1">
    <citation type="journal article" date="1987" name="EMBO J.">
        <title>A protein product of the Drosophila recessive tumor gene, l(2) gl, potentially has cell adhesion properties.</title>
        <authorList>
            <person name="Luetzelschwab R."/>
            <person name="Klaembt C."/>
            <person name="Rossa R."/>
            <person name="Schmidt O."/>
        </authorList>
    </citation>
    <scope>NUCLEOTIDE SEQUENCE [MRNA] (ISOFORM P127)</scope>
</reference>
<reference key="2">
    <citation type="journal article" date="1987" name="EMBO J.">
        <authorList>
            <person name="Luetzelschwab R."/>
            <person name="Klaembt C."/>
            <person name="Rossa R."/>
            <person name="Schmidt O."/>
        </authorList>
    </citation>
    <scope>ERRATUM OF PUBMED:16453778</scope>
</reference>
<reference key="3">
    <citation type="journal article" date="1987" name="Cell">
        <title>Structure of the l(2)gl gene of Drosophila and delimitation of its tumor suppressor domain.</title>
        <authorList>
            <person name="Jacob L."/>
            <person name="Opper M."/>
            <person name="Metzroth B."/>
            <person name="Phannavong B."/>
            <person name="Mechler B.M."/>
        </authorList>
    </citation>
    <scope>NUCLEOTIDE SEQUENCE [GENOMIC DNA]</scope>
    <scope>FUNCTION</scope>
    <scope>ALTERNATIVE SPLICING (ISOFORMS P127 AND P78)</scope>
    <source>
        <tissue>Embryo</tissue>
    </source>
</reference>
<reference key="4">
    <citation type="journal article" date="2000" name="Science">
        <title>The genome sequence of Drosophila melanogaster.</title>
        <authorList>
            <person name="Adams M.D."/>
            <person name="Celniker S.E."/>
            <person name="Holt R.A."/>
            <person name="Evans C.A."/>
            <person name="Gocayne J.D."/>
            <person name="Amanatides P.G."/>
            <person name="Scherer S.E."/>
            <person name="Li P.W."/>
            <person name="Hoskins R.A."/>
            <person name="Galle R.F."/>
            <person name="George R.A."/>
            <person name="Lewis S.E."/>
            <person name="Richards S."/>
            <person name="Ashburner M."/>
            <person name="Henderson S.N."/>
            <person name="Sutton G.G."/>
            <person name="Wortman J.R."/>
            <person name="Yandell M.D."/>
            <person name="Zhang Q."/>
            <person name="Chen L.X."/>
            <person name="Brandon R.C."/>
            <person name="Rogers Y.-H.C."/>
            <person name="Blazej R.G."/>
            <person name="Champe M."/>
            <person name="Pfeiffer B.D."/>
            <person name="Wan K.H."/>
            <person name="Doyle C."/>
            <person name="Baxter E.G."/>
            <person name="Helt G."/>
            <person name="Nelson C.R."/>
            <person name="Miklos G.L.G."/>
            <person name="Abril J.F."/>
            <person name="Agbayani A."/>
            <person name="An H.-J."/>
            <person name="Andrews-Pfannkoch C."/>
            <person name="Baldwin D."/>
            <person name="Ballew R.M."/>
            <person name="Basu A."/>
            <person name="Baxendale J."/>
            <person name="Bayraktaroglu L."/>
            <person name="Beasley E.M."/>
            <person name="Beeson K.Y."/>
            <person name="Benos P.V."/>
            <person name="Berman B.P."/>
            <person name="Bhandari D."/>
            <person name="Bolshakov S."/>
            <person name="Borkova D."/>
            <person name="Botchan M.R."/>
            <person name="Bouck J."/>
            <person name="Brokstein P."/>
            <person name="Brottier P."/>
            <person name="Burtis K.C."/>
            <person name="Busam D.A."/>
            <person name="Butler H."/>
            <person name="Cadieu E."/>
            <person name="Center A."/>
            <person name="Chandra I."/>
            <person name="Cherry J.M."/>
            <person name="Cawley S."/>
            <person name="Dahlke C."/>
            <person name="Davenport L.B."/>
            <person name="Davies P."/>
            <person name="de Pablos B."/>
            <person name="Delcher A."/>
            <person name="Deng Z."/>
            <person name="Mays A.D."/>
            <person name="Dew I."/>
            <person name="Dietz S.M."/>
            <person name="Dodson K."/>
            <person name="Doup L.E."/>
            <person name="Downes M."/>
            <person name="Dugan-Rocha S."/>
            <person name="Dunkov B.C."/>
            <person name="Dunn P."/>
            <person name="Durbin K.J."/>
            <person name="Evangelista C.C."/>
            <person name="Ferraz C."/>
            <person name="Ferriera S."/>
            <person name="Fleischmann W."/>
            <person name="Fosler C."/>
            <person name="Gabrielian A.E."/>
            <person name="Garg N.S."/>
            <person name="Gelbart W.M."/>
            <person name="Glasser K."/>
            <person name="Glodek A."/>
            <person name="Gong F."/>
            <person name="Gorrell J.H."/>
            <person name="Gu Z."/>
            <person name="Guan P."/>
            <person name="Harris M."/>
            <person name="Harris N.L."/>
            <person name="Harvey D.A."/>
            <person name="Heiman T.J."/>
            <person name="Hernandez J.R."/>
            <person name="Houck J."/>
            <person name="Hostin D."/>
            <person name="Houston K.A."/>
            <person name="Howland T.J."/>
            <person name="Wei M.-H."/>
            <person name="Ibegwam C."/>
            <person name="Jalali M."/>
            <person name="Kalush F."/>
            <person name="Karpen G.H."/>
            <person name="Ke Z."/>
            <person name="Kennison J.A."/>
            <person name="Ketchum K.A."/>
            <person name="Kimmel B.E."/>
            <person name="Kodira C.D."/>
            <person name="Kraft C.L."/>
            <person name="Kravitz S."/>
            <person name="Kulp D."/>
            <person name="Lai Z."/>
            <person name="Lasko P."/>
            <person name="Lei Y."/>
            <person name="Levitsky A.A."/>
            <person name="Li J.H."/>
            <person name="Li Z."/>
            <person name="Liang Y."/>
            <person name="Lin X."/>
            <person name="Liu X."/>
            <person name="Mattei B."/>
            <person name="McIntosh T.C."/>
            <person name="McLeod M.P."/>
            <person name="McPherson D."/>
            <person name="Merkulov G."/>
            <person name="Milshina N.V."/>
            <person name="Mobarry C."/>
            <person name="Morris J."/>
            <person name="Moshrefi A."/>
            <person name="Mount S.M."/>
            <person name="Moy M."/>
            <person name="Murphy B."/>
            <person name="Murphy L."/>
            <person name="Muzny D.M."/>
            <person name="Nelson D.L."/>
            <person name="Nelson D.R."/>
            <person name="Nelson K.A."/>
            <person name="Nixon K."/>
            <person name="Nusskern D.R."/>
            <person name="Pacleb J.M."/>
            <person name="Palazzolo M."/>
            <person name="Pittman G.S."/>
            <person name="Pan S."/>
            <person name="Pollard J."/>
            <person name="Puri V."/>
            <person name="Reese M.G."/>
            <person name="Reinert K."/>
            <person name="Remington K."/>
            <person name="Saunders R.D.C."/>
            <person name="Scheeler F."/>
            <person name="Shen H."/>
            <person name="Shue B.C."/>
            <person name="Siden-Kiamos I."/>
            <person name="Simpson M."/>
            <person name="Skupski M.P."/>
            <person name="Smith T.J."/>
            <person name="Spier E."/>
            <person name="Spradling A.C."/>
            <person name="Stapleton M."/>
            <person name="Strong R."/>
            <person name="Sun E."/>
            <person name="Svirskas R."/>
            <person name="Tector C."/>
            <person name="Turner R."/>
            <person name="Venter E."/>
            <person name="Wang A.H."/>
            <person name="Wang X."/>
            <person name="Wang Z.-Y."/>
            <person name="Wassarman D.A."/>
            <person name="Weinstock G.M."/>
            <person name="Weissenbach J."/>
            <person name="Williams S.M."/>
            <person name="Woodage T."/>
            <person name="Worley K.C."/>
            <person name="Wu D."/>
            <person name="Yang S."/>
            <person name="Yao Q.A."/>
            <person name="Ye J."/>
            <person name="Yeh R.-F."/>
            <person name="Zaveri J.S."/>
            <person name="Zhan M."/>
            <person name="Zhang G."/>
            <person name="Zhao Q."/>
            <person name="Zheng L."/>
            <person name="Zheng X.H."/>
            <person name="Zhong F.N."/>
            <person name="Zhong W."/>
            <person name="Zhou X."/>
            <person name="Zhu S.C."/>
            <person name="Zhu X."/>
            <person name="Smith H.O."/>
            <person name="Gibbs R.A."/>
            <person name="Myers E.W."/>
            <person name="Rubin G.M."/>
            <person name="Venter J.C."/>
        </authorList>
    </citation>
    <scope>NUCLEOTIDE SEQUENCE [LARGE SCALE GENOMIC DNA]</scope>
    <source>
        <strain>Berkeley</strain>
    </source>
</reference>
<reference key="5">
    <citation type="journal article" date="2002" name="Genome Biol.">
        <title>Annotation of the Drosophila melanogaster euchromatic genome: a systematic review.</title>
        <authorList>
            <person name="Misra S."/>
            <person name="Crosby M.A."/>
            <person name="Mungall C.J."/>
            <person name="Matthews B.B."/>
            <person name="Campbell K.S."/>
            <person name="Hradecky P."/>
            <person name="Huang Y."/>
            <person name="Kaminker J.S."/>
            <person name="Millburn G.H."/>
            <person name="Prochnik S.E."/>
            <person name="Smith C.D."/>
            <person name="Tupy J.L."/>
            <person name="Whitfield E.J."/>
            <person name="Bayraktaroglu L."/>
            <person name="Berman B.P."/>
            <person name="Bettencourt B.R."/>
            <person name="Celniker S.E."/>
            <person name="de Grey A.D.N.J."/>
            <person name="Drysdale R.A."/>
            <person name="Harris N.L."/>
            <person name="Richter J."/>
            <person name="Russo S."/>
            <person name="Schroeder A.J."/>
            <person name="Shu S.Q."/>
            <person name="Stapleton M."/>
            <person name="Yamada C."/>
            <person name="Ashburner M."/>
            <person name="Gelbart W.M."/>
            <person name="Rubin G.M."/>
            <person name="Lewis S.E."/>
        </authorList>
    </citation>
    <scope>GENOME REANNOTATION</scope>
    <scope>ALTERNATIVE SPLICING</scope>
    <source>
        <strain>Berkeley</strain>
    </source>
</reference>
<reference key="6">
    <citation type="journal article" date="2002" name="Genome Biol.">
        <title>A Drosophila full-length cDNA resource.</title>
        <authorList>
            <person name="Stapleton M."/>
            <person name="Carlson J.W."/>
            <person name="Brokstein P."/>
            <person name="Yu C."/>
            <person name="Champe M."/>
            <person name="George R.A."/>
            <person name="Guarin H."/>
            <person name="Kronmiller B."/>
            <person name="Pacleb J.M."/>
            <person name="Park S."/>
            <person name="Wan K.H."/>
            <person name="Rubin G.M."/>
            <person name="Celniker S.E."/>
        </authorList>
    </citation>
    <scope>NUCLEOTIDE SEQUENCE [LARGE SCALE MRNA] (ISOFORM P127)</scope>
    <source>
        <strain>Berkeley</strain>
        <tissue>Embryo</tissue>
    </source>
</reference>
<reference key="7">
    <citation type="submission" date="2009-11" db="EMBL/GenBank/DDBJ databases">
        <authorList>
            <person name="Carlson J.W."/>
            <person name="Booth B."/>
            <person name="Frise E."/>
            <person name="Park S."/>
            <person name="Wan K.H."/>
            <person name="Yu C."/>
            <person name="Celniker S.E."/>
        </authorList>
    </citation>
    <scope>NUCLEOTIDE SEQUENCE [LARGE SCALE MRNA] (ISOFORMS B AND P127)</scope>
    <source>
        <strain>Berkeley</strain>
        <tissue>Embryo</tissue>
    </source>
</reference>
<reference key="8">
    <citation type="journal article" date="2003" name="Nat. Cell Biol.">
        <title>Dlg, Scrib and Lgl regulate neuroblast cell size and mitotic spindle asymmetry.</title>
        <authorList>
            <person name="Albertson R."/>
            <person name="Doe C.Q."/>
        </authorList>
    </citation>
    <scope>FUNCTION</scope>
    <scope>SUBCELLULAR LOCATION</scope>
</reference>
<reference key="9">
    <citation type="journal article" date="2008" name="Development">
        <title>Lgl and its phosphorylation by aPKC regulate oocyte polarity formation in Drosophila.</title>
        <authorList>
            <person name="Tian A.G."/>
            <person name="Deng W.M."/>
        </authorList>
    </citation>
    <scope>FUNCTION</scope>
    <scope>INTERACTION WITH APKC</scope>
    <scope>PHOSPHORYLATION BY APKC</scope>
</reference>
<reference key="10">
    <citation type="journal article" date="2008" name="Development">
        <title>PIP5K-dependent production of PIP2 sustains microtubule organization to establish polarized transport in the Drosophila oocyte.</title>
        <authorList>
            <person name="Gervais L."/>
            <person name="Claret S."/>
            <person name="Januschke J."/>
            <person name="Roth S."/>
            <person name="Guichet A."/>
        </authorList>
    </citation>
    <scope>SUBCELLULAR LOCATION</scope>
    <scope>DEVELOPMENTAL STAGE</scope>
</reference>
<reference key="11">
    <citation type="journal article" date="2008" name="J. Proteome Res.">
        <title>Phosphoproteome analysis of Drosophila melanogaster embryos.</title>
        <authorList>
            <person name="Zhai B."/>
            <person name="Villen J."/>
            <person name="Beausoleil S.A."/>
            <person name="Mintseris J."/>
            <person name="Gygi S.P."/>
        </authorList>
    </citation>
    <scope>PHOSPHORYLATION [LARGE SCALE ANALYSIS] AT SER-473; SER-484; SER-679; SER-808; SER-869; SER-876; SER-887; SER-889; SER-893 AND SER-1013</scope>
    <scope>IDENTIFICATION BY MASS SPECTROMETRY</scope>
    <source>
        <tissue>Embryo</tissue>
    </source>
</reference>
<reference key="12">
    <citation type="journal article" date="2010" name="PLoS Biol.">
        <title>Involvement of Lgl and Mahjong/VprBP in cell competition.</title>
        <authorList>
            <person name="Tamori Y."/>
            <person name="Bialucha C.U."/>
            <person name="Tian A.G."/>
            <person name="Kajita M."/>
            <person name="Huang Y.C."/>
            <person name="Norman M."/>
            <person name="Harrison N."/>
            <person name="Poulton J."/>
            <person name="Ivanovitch K."/>
            <person name="Disch L."/>
            <person name="Liu T."/>
            <person name="Deng W.M."/>
            <person name="Fujita Y."/>
        </authorList>
    </citation>
    <scope>INTERACTION WITH MAHJ</scope>
</reference>
<reference key="13">
    <citation type="journal article" date="2015" name="Dev. Cell">
        <title>Establishment of Par-Polarized Cortical Domains via Phosphoregulated Membrane Motifs.</title>
        <authorList>
            <person name="Bailey M.J."/>
            <person name="Prehoda K.E."/>
        </authorList>
    </citation>
    <scope>SUBCELLULAR LOCATION</scope>
    <scope>DOMAIN</scope>
    <scope>PHOSPHORYLATION</scope>
    <scope>MUTAGENESIS OF 647-ARG--GLN-681; 653-ARG-ARG-654; SER-656; 658-LYS-LYS-659; SER-660; SER-664 AND 666-ARG-ARG-667</scope>
</reference>
<reference key="14">
    <citation type="journal article" date="2019" name="Dev. Cell">
        <title>Mutations in ANKLE2, a ZIKA Virus Target, Disrupt an Asymmetric Cell Division Pathway in Drosophila Neuroblasts to Cause Microcephaly.</title>
        <authorList>
            <person name="Link N."/>
            <person name="Chung H."/>
            <person name="Jolly A."/>
            <person name="Withers M."/>
            <person name="Tepe B."/>
            <person name="Arenkiel B.R."/>
            <person name="Shah P.S."/>
            <person name="Krogan N.J."/>
            <person name="Aydin H."/>
            <person name="Geckinli B.B."/>
            <person name="Tos T."/>
            <person name="Isikay S."/>
            <person name="Tuysuz B."/>
            <person name="Mochida G.H."/>
            <person name="Thomas A.X."/>
            <person name="Clark R.D."/>
            <person name="Mirzaa G.M."/>
            <person name="Lupski J.R."/>
            <person name="Bellen H.J."/>
        </authorList>
    </citation>
    <scope>INTERACTION WITH BALL</scope>
</reference>
<feature type="chain" id="PRO_0000084345" description="Lethal(2) giant larvae protein">
    <location>
        <begin position="1"/>
        <end position="1161"/>
    </location>
</feature>
<feature type="repeat" description="WD 1">
    <location>
        <begin position="39"/>
        <end position="72"/>
    </location>
</feature>
<feature type="repeat" description="WD 2">
    <location>
        <begin position="82"/>
        <end position="128"/>
    </location>
</feature>
<feature type="repeat" description="WD 3">
    <location>
        <begin position="131"/>
        <end position="167"/>
    </location>
</feature>
<feature type="repeat" description="WD 4">
    <location>
        <begin position="189"/>
        <end position="223"/>
    </location>
</feature>
<feature type="repeat" description="WD 5">
    <location>
        <begin position="231"/>
        <end position="263"/>
    </location>
</feature>
<feature type="repeat" description="WD 6">
    <location>
        <begin position="278"/>
        <end position="320"/>
    </location>
</feature>
<feature type="repeat" description="WD 7">
    <location>
        <begin position="328"/>
        <end position="358"/>
    </location>
</feature>
<feature type="repeat" description="WD 8">
    <location>
        <begin position="380"/>
        <end position="464"/>
    </location>
</feature>
<feature type="repeat" description="WD 9">
    <location>
        <begin position="513"/>
        <end position="594"/>
    </location>
</feature>
<feature type="repeat" description="WD 10">
    <location>
        <begin position="603"/>
        <end position="664"/>
    </location>
</feature>
<feature type="repeat" description="WD 11">
    <location>
        <begin position="708"/>
        <end position="778"/>
    </location>
</feature>
<feature type="repeat" description="WD 12">
    <location>
        <begin position="787"/>
        <end position="832"/>
    </location>
</feature>
<feature type="repeat" description="WD 13">
    <location>
        <begin position="837"/>
        <end position="927"/>
    </location>
</feature>
<feature type="repeat" description="WD 14">
    <location>
        <begin position="941"/>
        <end position="964"/>
    </location>
</feature>
<feature type="region of interest" description="Phospho-regulated basic and hydrophobic (PRBH) motif" evidence="7">
    <location>
        <begin position="15"/>
        <end position="86"/>
    </location>
</feature>
<feature type="region of interest" description="Disordered" evidence="1">
    <location>
        <begin position="1141"/>
        <end position="1161"/>
    </location>
</feature>
<feature type="modified residue" description="Phosphoserine" evidence="4">
    <location>
        <position position="473"/>
    </location>
</feature>
<feature type="modified residue" description="Phosphoserine" evidence="4">
    <location>
        <position position="484"/>
    </location>
</feature>
<feature type="modified residue" description="Phosphoserine" evidence="4">
    <location>
        <position position="679"/>
    </location>
</feature>
<feature type="modified residue" description="Phosphoserine" evidence="4">
    <location>
        <position position="808"/>
    </location>
</feature>
<feature type="modified residue" description="Phosphoserine" evidence="4">
    <location>
        <position position="869"/>
    </location>
</feature>
<feature type="modified residue" description="Phosphoserine" evidence="4">
    <location>
        <position position="876"/>
    </location>
</feature>
<feature type="modified residue" description="Phosphoserine" evidence="4">
    <location>
        <position position="887"/>
    </location>
</feature>
<feature type="modified residue" description="Phosphoserine" evidence="4">
    <location>
        <position position="889"/>
    </location>
</feature>
<feature type="modified residue" description="Phosphoserine" evidence="4">
    <location>
        <position position="893"/>
    </location>
</feature>
<feature type="modified residue" description="Phosphoserine" evidence="4">
    <location>
        <position position="1013"/>
    </location>
</feature>
<feature type="splice variant" id="VSP_021793" description="In isoform D." evidence="10">
    <location>
        <begin position="1"/>
        <end position="49"/>
    </location>
</feature>
<feature type="splice variant" id="VSP_021794" description="In isoform B." evidence="9">
    <original>HRLQKDLFAYRK</original>
    <variation>QRYI</variation>
    <location>
        <begin position="17"/>
        <end position="28"/>
    </location>
</feature>
<feature type="splice variant" id="VSP_004299" description="In isoform p78." evidence="10">
    <original>V</original>
    <variation>F</variation>
    <location>
        <position position="708"/>
    </location>
</feature>
<feature type="splice variant" id="VSP_004300" description="In isoform p78." evidence="10">
    <location>
        <begin position="709"/>
        <end position="1161"/>
    </location>
</feature>
<feature type="mutagenesis site" description="Reduced cortical localization and increased cytoplasmic localization." evidence="7">
    <location>
        <begin position="647"/>
        <end position="681"/>
    </location>
</feature>
<feature type="mutagenesis site" description="Reduced cortical localization and increased cytoplasmic localization." evidence="7">
    <original>RR</original>
    <variation>DD</variation>
    <location>
        <begin position="653"/>
        <end position="654"/>
    </location>
</feature>
<feature type="mutagenesis site" description="In 3A; loss of phosphorylation. In the presence of aPKC remains localized to the cell cortex and does not display any decrease in phospholipid binding; when associated with A-660 and A-664." evidence="7">
    <original>S</original>
    <variation>A</variation>
    <location>
        <position position="656"/>
    </location>
</feature>
<feature type="mutagenesis site" description="In 3D; phosphomimetic mutant that displays a slight decrease in phospholipid binding and reduced cortical localization; when associated with D-660 and D-664." evidence="7">
    <original>S</original>
    <variation>D</variation>
    <location>
        <position position="656"/>
    </location>
</feature>
<feature type="mutagenesis site" description="In 4k/R-D; phosphomimetic mutant that displays decreased phospholipid binding and reduced cortical localization; when associated with D-666 and D-667." evidence="7">
    <original>KK</original>
    <variation>DD</variation>
    <location>
        <begin position="658"/>
        <end position="659"/>
    </location>
</feature>
<feature type="mutagenesis site" description="In 3A; loss of phosphorylation. In the presence of aPKC remains localized to the cell cortex and does not display any decrease in phospholipid binding; when associated with A-656 and A-664." evidence="7">
    <original>S</original>
    <variation>A</variation>
    <location>
        <position position="660"/>
    </location>
</feature>
<feature type="mutagenesis site" description="In 3D; phosphomimetic mutant that displays a slight decrease in phospholipid binding and reduced cortical localization; when associated with D-656 and D-664." evidence="7">
    <original>S</original>
    <variation>D</variation>
    <location>
        <position position="660"/>
    </location>
</feature>
<feature type="mutagenesis site" description="In 3A; loss of phosphorylation. In the presence of aPKC remains localized to the cell cortex and does not display any decrease in phospholipid binding; when associated with A-656 and A-660." evidence="7">
    <original>S</original>
    <variation>A</variation>
    <location>
        <position position="664"/>
    </location>
</feature>
<feature type="mutagenesis site" description="In 3D; phosphomimetic mutant that displays a slight decrease in phospholipid binding and reduced cortical localization; when associated with D-656 and D-660." evidence="7">
    <original>S</original>
    <variation>D</variation>
    <location>
        <position position="664"/>
    </location>
</feature>
<feature type="mutagenesis site" description="In 4k/R-D; phosphomimetic mutant that displays decreased phospholipid binding and reduced cortical localization; when associated with 658-D--D-659." evidence="7">
    <original>RK</original>
    <variation>DD</variation>
    <location>
        <begin position="666"/>
        <end position="667"/>
    </location>
</feature>
<feature type="sequence conflict" description="In Ref. 3; AAA28671/AAA28672." evidence="10" ref="3">
    <original>L</original>
    <variation>F</variation>
    <location>
        <position position="2"/>
    </location>
</feature>
<feature type="sequence conflict" description="In Ref. 1; CAA29007." evidence="10" ref="1">
    <original>KP</original>
    <variation>A</variation>
    <location>
        <begin position="37"/>
        <end position="38"/>
    </location>
</feature>
<feature type="sequence conflict" description="In Ref. 7; ACY56896." evidence="10" ref="7">
    <original>A</original>
    <variation>V</variation>
    <location>
        <position position="58"/>
    </location>
</feature>
<feature type="sequence conflict" description="In Ref. 1; CAA29007." evidence="10" ref="1">
    <original>G</original>
    <variation>S</variation>
    <location>
        <position position="185"/>
    </location>
</feature>
<feature type="sequence conflict" description="In Ref. 1; CAA29007." evidence="10" ref="1">
    <original>G</original>
    <variation>R</variation>
    <location>
        <position position="227"/>
    </location>
</feature>
<feature type="sequence conflict" description="In Ref. 1; CAA29007." evidence="10" ref="1">
    <original>FTW</original>
    <variation>RYL</variation>
    <location>
        <begin position="243"/>
        <end position="245"/>
    </location>
</feature>
<feature type="sequence conflict" description="In Ref. 1; CAA29007." evidence="10" ref="1">
    <original>Y</original>
    <variation>N</variation>
    <location>
        <position position="304"/>
    </location>
</feature>
<feature type="sequence conflict" description="In Ref. 1; CAA29007." evidence="10" ref="1">
    <original>F</original>
    <variation>I</variation>
    <location>
        <position position="331"/>
    </location>
</feature>
<feature type="sequence conflict" description="In Ref. 1; CAA29007." evidence="10" ref="1">
    <original>N</original>
    <variation>S</variation>
    <location>
        <position position="338"/>
    </location>
</feature>
<feature type="sequence conflict" description="In Ref. 1; CAA29007." evidence="10" ref="1">
    <original>I</original>
    <variation>T</variation>
    <location>
        <position position="366"/>
    </location>
</feature>
<feature type="sequence conflict" description="In Ref. 1; CAA29007." evidence="10" ref="1">
    <original>V</original>
    <variation>L</variation>
    <location>
        <position position="388"/>
    </location>
</feature>
<feature type="sequence conflict" description="In Ref. 1; CAA29007." evidence="10" ref="1">
    <original>VKKI</original>
    <variation>SEEN</variation>
    <location>
        <begin position="512"/>
        <end position="515"/>
    </location>
</feature>
<feature type="sequence conflict" description="In Ref. 1; CAA29007." evidence="10" ref="1">
    <original>KLRKGRSTR</original>
    <variation>SFARVDQTK</variation>
    <location>
        <begin position="667"/>
        <end position="675"/>
    </location>
</feature>
<feature type="sequence conflict" description="In Ref. 1; CAA29007." evidence="10" ref="1">
    <original>T</original>
    <variation>S</variation>
    <location>
        <position position="727"/>
    </location>
</feature>
<feature type="sequence conflict" description="In Ref. 7; ACY56896." evidence="10" ref="7">
    <original>I</original>
    <variation>V</variation>
    <location>
        <position position="857"/>
    </location>
</feature>
<feature type="sequence conflict" description="In Ref. 3; AAA28671." evidence="10" ref="3">
    <original>R</original>
    <variation>G</variation>
    <location>
        <position position="959"/>
    </location>
</feature>
<feature type="sequence conflict" description="In Ref. 1; CAA29007." evidence="10" ref="1">
    <original>A</original>
    <variation>G</variation>
    <location>
        <position position="1095"/>
    </location>
</feature>
<organism>
    <name type="scientific">Drosophila melanogaster</name>
    <name type="common">Fruit fly</name>
    <dbReference type="NCBI Taxonomy" id="7227"/>
    <lineage>
        <taxon>Eukaryota</taxon>
        <taxon>Metazoa</taxon>
        <taxon>Ecdysozoa</taxon>
        <taxon>Arthropoda</taxon>
        <taxon>Hexapoda</taxon>
        <taxon>Insecta</taxon>
        <taxon>Pterygota</taxon>
        <taxon>Neoptera</taxon>
        <taxon>Endopterygota</taxon>
        <taxon>Diptera</taxon>
        <taxon>Brachycera</taxon>
        <taxon>Muscomorpha</taxon>
        <taxon>Ephydroidea</taxon>
        <taxon>Drosophilidae</taxon>
        <taxon>Drosophila</taxon>
        <taxon>Sophophora</taxon>
    </lineage>
</organism>
<proteinExistence type="evidence at protein level"/>
<protein>
    <recommendedName>
        <fullName>Lethal(2) giant larvae protein</fullName>
    </recommendedName>
</protein>
<dbReference type="EMBL" id="X05426">
    <property type="protein sequence ID" value="CAA29007.1"/>
    <property type="molecule type" value="mRNA"/>
</dbReference>
<dbReference type="EMBL" id="M17022">
    <property type="protein sequence ID" value="AAA28671.1"/>
    <property type="molecule type" value="Genomic_DNA"/>
</dbReference>
<dbReference type="EMBL" id="M17022">
    <property type="protein sequence ID" value="AAA28672.1"/>
    <property type="molecule type" value="Genomic_DNA"/>
</dbReference>
<dbReference type="EMBL" id="AE014134">
    <property type="protein sequence ID" value="AAG22255.1"/>
    <property type="molecule type" value="Genomic_DNA"/>
</dbReference>
<dbReference type="EMBL" id="AE014134">
    <property type="protein sequence ID" value="AAG22256.2"/>
    <property type="molecule type" value="Genomic_DNA"/>
</dbReference>
<dbReference type="EMBL" id="AE014134">
    <property type="protein sequence ID" value="AAN10501.1"/>
    <property type="molecule type" value="Genomic_DNA"/>
</dbReference>
<dbReference type="EMBL" id="AE014134">
    <property type="protein sequence ID" value="AAN10502.1"/>
    <property type="molecule type" value="Genomic_DNA"/>
</dbReference>
<dbReference type="EMBL" id="AE014134">
    <property type="protein sequence ID" value="AAN10503.1"/>
    <property type="molecule type" value="Genomic_DNA"/>
</dbReference>
<dbReference type="EMBL" id="AY051654">
    <property type="protein sequence ID" value="AAK93078.1"/>
    <property type="molecule type" value="mRNA"/>
</dbReference>
<dbReference type="EMBL" id="BT100129">
    <property type="protein sequence ID" value="ACX85650.1"/>
    <property type="molecule type" value="mRNA"/>
</dbReference>
<dbReference type="EMBL" id="BT100228">
    <property type="protein sequence ID" value="ACY56896.1"/>
    <property type="molecule type" value="mRNA"/>
</dbReference>
<dbReference type="PIR" id="A27069">
    <property type="entry name" value="A27069"/>
</dbReference>
<dbReference type="PIR" id="A27868">
    <property type="entry name" value="A27868"/>
</dbReference>
<dbReference type="RefSeq" id="NP_001245801.1">
    <molecule id="P08111-1"/>
    <property type="nucleotide sequence ID" value="NM_001258872.2"/>
</dbReference>
<dbReference type="RefSeq" id="NP_001245802.1">
    <molecule id="P08111-1"/>
    <property type="nucleotide sequence ID" value="NM_001258873.2"/>
</dbReference>
<dbReference type="RefSeq" id="NP_001245803.1">
    <molecule id="P08111-1"/>
    <property type="nucleotide sequence ID" value="NM_001258874.2"/>
</dbReference>
<dbReference type="RefSeq" id="NP_001245804.1">
    <molecule id="P08111-1"/>
    <property type="nucleotide sequence ID" value="NM_001258875.2"/>
</dbReference>
<dbReference type="RefSeq" id="NP_523439.2">
    <molecule id="P08111-1"/>
    <property type="nucleotide sequence ID" value="NM_078715.4"/>
</dbReference>
<dbReference type="RefSeq" id="NP_722583.1">
    <molecule id="P08111-3"/>
    <property type="nucleotide sequence ID" value="NM_164348.3"/>
</dbReference>
<dbReference type="RefSeq" id="NP_722584.1">
    <molecule id="P08111-1"/>
    <property type="nucleotide sequence ID" value="NM_164349.3"/>
</dbReference>
<dbReference type="RefSeq" id="NP_722585.1">
    <molecule id="P08111-4"/>
    <property type="nucleotide sequence ID" value="NM_164350.3"/>
</dbReference>
<dbReference type="RefSeq" id="NP_722586.1">
    <molecule id="P08111-4"/>
    <property type="nucleotide sequence ID" value="NM_164351.3"/>
</dbReference>
<dbReference type="RefSeq" id="NP_722587.1">
    <molecule id="P08111-4"/>
    <property type="nucleotide sequence ID" value="NM_164352.3"/>
</dbReference>
<dbReference type="SMR" id="P08111"/>
<dbReference type="BioGRID" id="59421">
    <property type="interactions" value="42"/>
</dbReference>
<dbReference type="ComplexPortal" id="CPX-2410">
    <property type="entry name" value="Scribble cell polarity complex"/>
</dbReference>
<dbReference type="DIP" id="DIP-22687N"/>
<dbReference type="FunCoup" id="P08111">
    <property type="interactions" value="467"/>
</dbReference>
<dbReference type="IntAct" id="P08111">
    <property type="interactions" value="7"/>
</dbReference>
<dbReference type="STRING" id="7227.FBpp0297547"/>
<dbReference type="GlyGen" id="P08111">
    <property type="glycosylation" value="1 site, 1 O-linked glycan (1 site)"/>
</dbReference>
<dbReference type="iPTMnet" id="P08111"/>
<dbReference type="PaxDb" id="7227-FBpp0297544"/>
<dbReference type="DNASU" id="33156"/>
<dbReference type="EnsemblMetazoa" id="FBtr0078166">
    <molecule id="P08111-3"/>
    <property type="protein sequence ID" value="FBpp0077824"/>
    <property type="gene ID" value="FBgn0002121"/>
</dbReference>
<dbReference type="EnsemblMetazoa" id="FBtr0078167">
    <molecule id="P08111-4"/>
    <property type="protein sequence ID" value="FBpp0077825"/>
    <property type="gene ID" value="FBgn0002121"/>
</dbReference>
<dbReference type="EnsemblMetazoa" id="FBtr0078168">
    <molecule id="P08111-4"/>
    <property type="protein sequence ID" value="FBpp0077826"/>
    <property type="gene ID" value="FBgn0002121"/>
</dbReference>
<dbReference type="EnsemblMetazoa" id="FBtr0078169">
    <molecule id="P08111-4"/>
    <property type="protein sequence ID" value="FBpp0077827"/>
    <property type="gene ID" value="FBgn0002121"/>
</dbReference>
<dbReference type="EnsemblMetazoa" id="FBtr0078170">
    <molecule id="P08111-1"/>
    <property type="protein sequence ID" value="FBpp0077828"/>
    <property type="gene ID" value="FBgn0002121"/>
</dbReference>
<dbReference type="EnsemblMetazoa" id="FBtr0078171">
    <molecule id="P08111-1"/>
    <property type="protein sequence ID" value="FBpp0077829"/>
    <property type="gene ID" value="FBgn0002121"/>
</dbReference>
<dbReference type="EnsemblMetazoa" id="FBtr0306589">
    <molecule id="P08111-1"/>
    <property type="protein sequence ID" value="FBpp0297544"/>
    <property type="gene ID" value="FBgn0002121"/>
</dbReference>
<dbReference type="EnsemblMetazoa" id="FBtr0306590">
    <molecule id="P08111-1"/>
    <property type="protein sequence ID" value="FBpp0297545"/>
    <property type="gene ID" value="FBgn0002121"/>
</dbReference>
<dbReference type="EnsemblMetazoa" id="FBtr0306591">
    <molecule id="P08111-1"/>
    <property type="protein sequence ID" value="FBpp0297546"/>
    <property type="gene ID" value="FBgn0002121"/>
</dbReference>
<dbReference type="EnsemblMetazoa" id="FBtr0306592">
    <molecule id="P08111-1"/>
    <property type="protein sequence ID" value="FBpp0297547"/>
    <property type="gene ID" value="FBgn0002121"/>
</dbReference>
<dbReference type="GeneID" id="33156"/>
<dbReference type="KEGG" id="dme:Dmel_CG2671"/>
<dbReference type="UCSC" id="CG2671-RE">
    <property type="organism name" value="d. melanogaster"/>
</dbReference>
<dbReference type="AGR" id="FB:FBgn0002121"/>
<dbReference type="FlyBase" id="FBgn0002121">
    <property type="gene designation" value="l(2)gl"/>
</dbReference>
<dbReference type="VEuPathDB" id="VectorBase:FBgn0002121"/>
<dbReference type="eggNOG" id="KOG1983">
    <property type="taxonomic scope" value="Eukaryota"/>
</dbReference>
<dbReference type="GeneTree" id="ENSGT00950000182906"/>
<dbReference type="InParanoid" id="P08111"/>
<dbReference type="OMA" id="TKNHSRP"/>
<dbReference type="OrthoDB" id="19944at2759"/>
<dbReference type="PhylomeDB" id="P08111"/>
<dbReference type="SignaLink" id="P08111"/>
<dbReference type="BioGRID-ORCS" id="33156">
    <property type="hits" value="0 hits in 3 CRISPR screens"/>
</dbReference>
<dbReference type="ChiTaRS" id="l(2)gl">
    <property type="organism name" value="fly"/>
</dbReference>
<dbReference type="GenomeRNAi" id="33156"/>
<dbReference type="PRO" id="PR:P08111"/>
<dbReference type="Proteomes" id="UP000000803">
    <property type="component" value="Chromosome 2L"/>
</dbReference>
<dbReference type="Bgee" id="FBgn0002121">
    <property type="expression patterns" value="Expressed in adult differentiating enterocyte in digestive tract and 183 other cell types or tissues"/>
</dbReference>
<dbReference type="ExpressionAtlas" id="P08111">
    <property type="expression patterns" value="baseline and differential"/>
</dbReference>
<dbReference type="GO" id="GO:0016327">
    <property type="term" value="C:apicolateral plasma membrane"/>
    <property type="evidence" value="ECO:0000314"/>
    <property type="project" value="FlyBase"/>
</dbReference>
<dbReference type="GO" id="GO:0005938">
    <property type="term" value="C:cell cortex"/>
    <property type="evidence" value="ECO:0000314"/>
    <property type="project" value="FlyBase"/>
</dbReference>
<dbReference type="GO" id="GO:0030864">
    <property type="term" value="C:cortical actin cytoskeleton"/>
    <property type="evidence" value="ECO:0000318"/>
    <property type="project" value="GO_Central"/>
</dbReference>
<dbReference type="GO" id="GO:0030863">
    <property type="term" value="C:cortical cytoskeleton"/>
    <property type="evidence" value="ECO:0000314"/>
    <property type="project" value="FlyBase"/>
</dbReference>
<dbReference type="GO" id="GO:0005737">
    <property type="term" value="C:cytoplasm"/>
    <property type="evidence" value="ECO:0000314"/>
    <property type="project" value="FlyBase"/>
</dbReference>
<dbReference type="GO" id="GO:0031012">
    <property type="term" value="C:extracellular matrix"/>
    <property type="evidence" value="ECO:0000314"/>
    <property type="project" value="FlyBase"/>
</dbReference>
<dbReference type="GO" id="GO:0000139">
    <property type="term" value="C:Golgi membrane"/>
    <property type="evidence" value="ECO:0000314"/>
    <property type="project" value="FlyBase"/>
</dbReference>
<dbReference type="GO" id="GO:0031256">
    <property type="term" value="C:leading edge membrane"/>
    <property type="evidence" value="ECO:0000314"/>
    <property type="project" value="FlyBase"/>
</dbReference>
<dbReference type="GO" id="GO:0005886">
    <property type="term" value="C:plasma membrane"/>
    <property type="evidence" value="ECO:0000314"/>
    <property type="project" value="FlyBase"/>
</dbReference>
<dbReference type="GO" id="GO:0042734">
    <property type="term" value="C:presynaptic membrane"/>
    <property type="evidence" value="ECO:0000314"/>
    <property type="project" value="FlyBase"/>
</dbReference>
<dbReference type="GO" id="GO:0005920">
    <property type="term" value="C:smooth septate junction"/>
    <property type="evidence" value="ECO:0000314"/>
    <property type="project" value="FlyBase"/>
</dbReference>
<dbReference type="GO" id="GO:0005096">
    <property type="term" value="F:GTPase activator activity"/>
    <property type="evidence" value="ECO:0000318"/>
    <property type="project" value="GO_Central"/>
</dbReference>
<dbReference type="GO" id="GO:0017022">
    <property type="term" value="F:myosin binding"/>
    <property type="evidence" value="ECO:0000316"/>
    <property type="project" value="FlyBase"/>
</dbReference>
<dbReference type="GO" id="GO:0045159">
    <property type="term" value="F:myosin II binding"/>
    <property type="evidence" value="ECO:0000316"/>
    <property type="project" value="FlyBase"/>
</dbReference>
<dbReference type="GO" id="GO:0019901">
    <property type="term" value="F:protein kinase binding"/>
    <property type="evidence" value="ECO:0000353"/>
    <property type="project" value="UniProtKB"/>
</dbReference>
<dbReference type="GO" id="GO:0004860">
    <property type="term" value="F:protein kinase inhibitor activity"/>
    <property type="evidence" value="ECO:0000314"/>
    <property type="project" value="FlyBase"/>
</dbReference>
<dbReference type="GO" id="GO:0000149">
    <property type="term" value="F:SNARE binding"/>
    <property type="evidence" value="ECO:0000353"/>
    <property type="project" value="FlyBase"/>
</dbReference>
<dbReference type="GO" id="GO:0019905">
    <property type="term" value="F:syntaxin binding"/>
    <property type="evidence" value="ECO:0000318"/>
    <property type="project" value="GO_Central"/>
</dbReference>
<dbReference type="GO" id="GO:0030036">
    <property type="term" value="P:actin cytoskeleton organization"/>
    <property type="evidence" value="ECO:0000315"/>
    <property type="project" value="FlyBase"/>
</dbReference>
<dbReference type="GO" id="GO:0045176">
    <property type="term" value="P:apical protein localization"/>
    <property type="evidence" value="ECO:0000315"/>
    <property type="project" value="FlyBase"/>
</dbReference>
<dbReference type="GO" id="GO:0055059">
    <property type="term" value="P:asymmetric neuroblast division"/>
    <property type="evidence" value="ECO:0000316"/>
    <property type="project" value="FlyBase"/>
</dbReference>
<dbReference type="GO" id="GO:0045167">
    <property type="term" value="P:asymmetric protein localization involved in cell fate determination"/>
    <property type="evidence" value="ECO:0000315"/>
    <property type="project" value="FlyBase"/>
</dbReference>
<dbReference type="GO" id="GO:0048102">
    <property type="term" value="P:autophagic cell death"/>
    <property type="evidence" value="ECO:0000315"/>
    <property type="project" value="FlyBase"/>
</dbReference>
<dbReference type="GO" id="GO:0045175">
    <property type="term" value="P:basal protein localization"/>
    <property type="evidence" value="ECO:0000315"/>
    <property type="project" value="FlyBase"/>
</dbReference>
<dbReference type="GO" id="GO:0035212">
    <property type="term" value="P:cell competition in a multicellular organism"/>
    <property type="evidence" value="ECO:0000315"/>
    <property type="project" value="FlyBase"/>
</dbReference>
<dbReference type="GO" id="GO:0035293">
    <property type="term" value="P:chitin-based larval cuticle pattern formation"/>
    <property type="evidence" value="ECO:0000315"/>
    <property type="project" value="FlyBase"/>
</dbReference>
<dbReference type="GO" id="GO:0030866">
    <property type="term" value="P:cortical actin cytoskeleton organization"/>
    <property type="evidence" value="ECO:0000318"/>
    <property type="project" value="GO_Central"/>
</dbReference>
<dbReference type="GO" id="GO:0007391">
    <property type="term" value="P:dorsal closure"/>
    <property type="evidence" value="ECO:0000304"/>
    <property type="project" value="FlyBase"/>
</dbReference>
<dbReference type="GO" id="GO:0048730">
    <property type="term" value="P:epidermis morphogenesis"/>
    <property type="evidence" value="ECO:0000315"/>
    <property type="project" value="FlyBase"/>
</dbReference>
<dbReference type="GO" id="GO:0090163">
    <property type="term" value="P:establishment of epithelial cell planar polarity"/>
    <property type="evidence" value="ECO:0000315"/>
    <property type="project" value="FlyBase"/>
</dbReference>
<dbReference type="GO" id="GO:0000132">
    <property type="term" value="P:establishment of mitotic spindle orientation"/>
    <property type="evidence" value="ECO:0000315"/>
    <property type="project" value="FlyBase"/>
</dbReference>
<dbReference type="GO" id="GO:0045184">
    <property type="term" value="P:establishment of protein localization"/>
    <property type="evidence" value="ECO:0000315"/>
    <property type="project" value="FlyBase"/>
</dbReference>
<dbReference type="GO" id="GO:0051294">
    <property type="term" value="P:establishment of spindle orientation"/>
    <property type="evidence" value="ECO:0000318"/>
    <property type="project" value="GO_Central"/>
</dbReference>
<dbReference type="GO" id="GO:0045196">
    <property type="term" value="P:establishment or maintenance of neuroblast polarity"/>
    <property type="evidence" value="ECO:0000316"/>
    <property type="project" value="FlyBase"/>
</dbReference>
<dbReference type="GO" id="GO:0016334">
    <property type="term" value="P:establishment or maintenance of polarity of follicular epithelium"/>
    <property type="evidence" value="ECO:0000316"/>
    <property type="project" value="FlyBase"/>
</dbReference>
<dbReference type="GO" id="GO:0006887">
    <property type="term" value="P:exocytosis"/>
    <property type="evidence" value="ECO:0007669"/>
    <property type="project" value="UniProtKB-KW"/>
</dbReference>
<dbReference type="GO" id="GO:0006893">
    <property type="term" value="P:Golgi to plasma membrane transport"/>
    <property type="evidence" value="ECO:0000318"/>
    <property type="project" value="GO_Central"/>
</dbReference>
<dbReference type="GO" id="GO:0051668">
    <property type="term" value="P:localization within membrane"/>
    <property type="evidence" value="ECO:0000315"/>
    <property type="project" value="FlyBase"/>
</dbReference>
<dbReference type="GO" id="GO:0016333">
    <property type="term" value="P:morphogenesis of follicular epithelium"/>
    <property type="evidence" value="ECO:0000315"/>
    <property type="project" value="FlyBase"/>
</dbReference>
<dbReference type="GO" id="GO:0045571">
    <property type="term" value="P:negative regulation of imaginal disc growth"/>
    <property type="evidence" value="ECO:0000315"/>
    <property type="project" value="FlyBase"/>
</dbReference>
<dbReference type="GO" id="GO:0007406">
    <property type="term" value="P:negative regulation of neuroblast proliferation"/>
    <property type="evidence" value="ECO:0000315"/>
    <property type="project" value="FlyBase"/>
</dbReference>
<dbReference type="GO" id="GO:0045746">
    <property type="term" value="P:negative regulation of Notch signaling pathway"/>
    <property type="evidence" value="ECO:0000315"/>
    <property type="project" value="FlyBase"/>
</dbReference>
<dbReference type="GO" id="GO:0007399">
    <property type="term" value="P:nervous system development"/>
    <property type="evidence" value="ECO:0000315"/>
    <property type="project" value="FlyBase"/>
</dbReference>
<dbReference type="GO" id="GO:0007314">
    <property type="term" value="P:oocyte anterior/posterior axis specification"/>
    <property type="evidence" value="ECO:0000315"/>
    <property type="project" value="FlyBase"/>
</dbReference>
<dbReference type="GO" id="GO:0016325">
    <property type="term" value="P:oocyte microtubule cytoskeleton organization"/>
    <property type="evidence" value="ECO:0000315"/>
    <property type="project" value="FlyBase"/>
</dbReference>
<dbReference type="GO" id="GO:0035332">
    <property type="term" value="P:positive regulation of hippo signaling"/>
    <property type="evidence" value="ECO:0000315"/>
    <property type="project" value="FlyBase"/>
</dbReference>
<dbReference type="GO" id="GO:0072697">
    <property type="term" value="P:protein localization to cell cortex"/>
    <property type="evidence" value="ECO:0000315"/>
    <property type="project" value="FlyBase"/>
</dbReference>
<dbReference type="GO" id="GO:0045464">
    <property type="term" value="P:R8 cell fate specification"/>
    <property type="evidence" value="ECO:0000315"/>
    <property type="project" value="FlyBase"/>
</dbReference>
<dbReference type="GO" id="GO:0032878">
    <property type="term" value="P:regulation of establishment or maintenance of cell polarity"/>
    <property type="evidence" value="ECO:0000318"/>
    <property type="project" value="GO_Central"/>
</dbReference>
<dbReference type="GO" id="GO:1904580">
    <property type="term" value="P:regulation of intracellular mRNA localization"/>
    <property type="evidence" value="ECO:0000315"/>
    <property type="project" value="FlyBase"/>
</dbReference>
<dbReference type="GO" id="GO:0008593">
    <property type="term" value="P:regulation of Notch signaling pathway"/>
    <property type="evidence" value="ECO:0000318"/>
    <property type="project" value="GO_Central"/>
</dbReference>
<dbReference type="GO" id="GO:0035070">
    <property type="term" value="P:salivary gland histolysis"/>
    <property type="evidence" value="ECO:0000315"/>
    <property type="project" value="FlyBase"/>
</dbReference>
<dbReference type="GO" id="GO:0007423">
    <property type="term" value="P:sensory organ development"/>
    <property type="evidence" value="ECO:0000315"/>
    <property type="project" value="FlyBase"/>
</dbReference>
<dbReference type="GO" id="GO:0016360">
    <property type="term" value="P:sensory organ precursor cell fate determination"/>
    <property type="evidence" value="ECO:0000315"/>
    <property type="project" value="FlyBase"/>
</dbReference>
<dbReference type="GO" id="GO:0019991">
    <property type="term" value="P:septate junction assembly"/>
    <property type="evidence" value="ECO:0000304"/>
    <property type="project" value="FlyBase"/>
</dbReference>
<dbReference type="GO" id="GO:0098725">
    <property type="term" value="P:symmetric cell division"/>
    <property type="evidence" value="ECO:0000315"/>
    <property type="project" value="FlyBase"/>
</dbReference>
<dbReference type="FunFam" id="2.130.10.10:FF:001433">
    <property type="entry name" value="Lethal(2) giant larvae protein"/>
    <property type="match status" value="1"/>
</dbReference>
<dbReference type="Gene3D" id="2.130.10.10">
    <property type="entry name" value="YVTN repeat-like/Quinoprotein amine dehydrogenase"/>
    <property type="match status" value="1"/>
</dbReference>
<dbReference type="InterPro" id="IPR000664">
    <property type="entry name" value="Lethal2_giant"/>
</dbReference>
<dbReference type="InterPro" id="IPR013577">
    <property type="entry name" value="LLGL2"/>
</dbReference>
<dbReference type="InterPro" id="IPR015943">
    <property type="entry name" value="WD40/YVTN_repeat-like_dom_sf"/>
</dbReference>
<dbReference type="InterPro" id="IPR036322">
    <property type="entry name" value="WD40_repeat_dom_sf"/>
</dbReference>
<dbReference type="PANTHER" id="PTHR10241">
    <property type="entry name" value="LETHAL 2 GIANT LARVAE PROTEIN"/>
    <property type="match status" value="1"/>
</dbReference>
<dbReference type="PANTHER" id="PTHR10241:SF29">
    <property type="entry name" value="LETHAL(2) GIANT LARVAE PROTEIN"/>
    <property type="match status" value="1"/>
</dbReference>
<dbReference type="Pfam" id="PF08366">
    <property type="entry name" value="LLGL"/>
    <property type="match status" value="1"/>
</dbReference>
<dbReference type="PRINTS" id="PR00962">
    <property type="entry name" value="LETHAL2GIANT"/>
</dbReference>
<dbReference type="SUPFAM" id="SSF50978">
    <property type="entry name" value="WD40 repeat-like"/>
    <property type="match status" value="2"/>
</dbReference>
<dbReference type="PROSITE" id="PS00678">
    <property type="entry name" value="WD_REPEATS_1"/>
    <property type="match status" value="1"/>
</dbReference>
<accession>P08111</accession>
<accession>A4UZW0</accession>
<accession>D0IQ91</accession>
<accession>D0IQJ0</accession>
<accession>Q0E8V5</accession>
<accession>Q24377</accession>
<accession>Q8IPV4</accession>
<accession>Q8IPV5</accession>
<accession>Q9VPI1</accession>
<keyword id="KW-0025">Alternative splicing</keyword>
<keyword id="KW-0131">Cell cycle</keyword>
<keyword id="KW-0963">Cytoplasm</keyword>
<keyword id="KW-0217">Developmental protein</keyword>
<keyword id="KW-0268">Exocytosis</keyword>
<keyword id="KW-0597">Phosphoprotein</keyword>
<keyword id="KW-1185">Reference proteome</keyword>
<keyword id="KW-0677">Repeat</keyword>
<keyword id="KW-0043">Tumor suppressor</keyword>
<keyword id="KW-0853">WD repeat</keyword>
<comment type="function">
    <text>Essential for the development of polarized epithelia, for cell polarity associated with asymmetric cell division of neuroblasts during development, and for oocyte polarity formation. Promotes the formation of actin-rich projections at the oocyte cortex and the posterior enrichment of par-1 which is required for oocyte polarization. Regulates the localization of axis-specifying morphogens such as stau and grk.</text>
</comment>
<comment type="function">
    <molecule>Isoform p78</molecule>
    <text>Has an essential role in control of cell proliferation and differentiation during development and could act as a tumor suppressor.</text>
</comment>
<comment type="function">
    <molecule>Isoform p127</molecule>
    <text>Has an accessory function in control of cell proliferation and differentiation during development.</text>
</comment>
<comment type="subunit">
    <text evidence="3 6 8">May form multimeric complexes. Interacts with mahj. Interacts with aPKC; leading to phosphorylation (PubMed:18094021, PubMed:20644714). Interacts with ball (PubMed:31735666).</text>
</comment>
<comment type="interaction">
    <interactant intactId="EBI-497569">
        <id>P08111</id>
    </interactant>
    <interactant intactId="EBI-160861">
        <id>A1Z9X0</id>
        <label>aPKC</label>
    </interactant>
    <organismsDiffer>false</organismsDiffer>
    <experiments>2</experiments>
</comment>
<comment type="subcellular location">
    <subcellularLocation>
        <location evidence="2 5 7">Cytoplasm</location>
        <location evidence="2 5 7">Cell cortex</location>
    </subcellularLocation>
    <subcellularLocation>
        <location evidence="7">Cytoplasm</location>
    </subcellularLocation>
    <text evidence="2 5">In larval and embryonic neuroblasts, detected in the cortex with apical enrichment from late interphase to metaphase, and uniform cortical localization during anaphase and telophase (PubMed:12545176). Localizes to the posterior cell cortex of the developing oocyte in a process dependent on the type-1 phosphatidylinositol 4-phosphate 5-kinase sktl (PubMed:18948416).</text>
</comment>
<comment type="alternative products">
    <event type="alternative splicing"/>
    <isoform>
        <id>P08111-1</id>
        <name>p127</name>
        <name>A</name>
        <name>C</name>
        <sequence type="displayed"/>
    </isoform>
    <isoform>
        <id>P08111-2</id>
        <name>p78</name>
        <name>EC371</name>
        <sequence type="described" ref="VSP_004299 VSP_004300"/>
    </isoform>
    <isoform>
        <id>P08111-3</id>
        <name>B</name>
        <sequence type="described" ref="VSP_021794"/>
    </isoform>
    <isoform>
        <id>P08111-4</id>
        <name>D</name>
        <name>E</name>
        <name>F</name>
        <sequence type="described" ref="VSP_021793"/>
    </isoform>
</comment>
<comment type="tissue specificity">
    <text>Expressed in the epithelial cells of the digestive tract and in gonads.</text>
</comment>
<comment type="developmental stage">
    <text evidence="5">Expressed abundantly in early embryogenesis. Moderate expression is found in larval and adult stages. In the egg chamber during late stages of oogenesis expressed in oocyte and nurse cells, but not in follicle cells (PubMed:18948416).</text>
</comment>
<comment type="domain">
    <text evidence="7">The phospho-regulated basic and hydrophobic (PRBH) motif is necessary and sufficient for interaction with phospholipids permitting cortical localization (PubMed:26481050). Phosphorylation of the PRBH motif by aPKC inhibits the association of the protein with the cortical membrane (PubMed:26481050).</text>
</comment>
<comment type="PTM">
    <text evidence="3 4 7">Phosphorylated by aPKC which lowers lipid affinity and promotes dissociation from the cell cortex (PubMed:26481050). In developing oocytes, aPKC-mediated phosphorylation restricts activity to the oocyte posterior and is required for oocyte polarity formation (PubMed:18094021, PubMed:18327897).</text>
</comment>
<comment type="similarity">
    <text evidence="10">Belongs to the WD repeat L(2)GL family.</text>
</comment>
<sequence length="1161" mass="126892">MLKFIRGKGQQPSADRHRLQKDLFAYRKTAQHGFPHKPSALAYDPVLKLMAIGTQTGALKVFGQPGVELYGQHTLLNNSASELNVQLLEWVYGTGRILSLTAANQLILWEPVGATLLPIKTLPFDGKLKKVSSLCCSLSKDLLWIGTEGGNIYQLDLHTFTIKEPVIYHDVVLEQVPPAYKLNPGAIESIRQLPNSPSKLLVAYNRGLCVLWDFESASVQRAYIAPGHGQSVGLTVNFEGSEFTWYHADGSYATWSIDNPEPPSNVNYVPYGPDPCKSINRLYKGKRRSNDVIVFSGGMPRSAYGDHNCVSVHASDGHKVCLDFTSKVIDFFVTFENNRDVAEVLVVLLEEELCAYDLTDPNICAIKAPYLHSVHASAVTCNYLASEVVQSVYESILRAGDEQDIDYSNISWPITGGTLPDNLEESVEEDATKLYEILLTGHEDGSVKFWDCTGVLLKPIYNFKTSSIFGSESDFRDDAAADMSAEQVDEGEPPFRKSGLFDPYSDDPRLAVKKIAFCPKTGQLIVGGTAGQIVIADFIDLPEKVSLKYISMNLVSDRDGFVWKGHDQLNVRSNLLDGEAIPTTERGVNISGVLQVLPPASITCMALEASWGLVSGGTAHGLVLFDFKNFVPVFHRCTLNPNDLTGAGEQLSRRKSFKKSLRESFRKLRKGRSTRTNQSNQVPTTLEARPVERQIEARCADDGLGSMVRCLLFAKTYVTNVNITSPTLWSATNASTVSVFLLHLPPAQTAATAVPSASGNAPPHMPRRISAQLAKEIQLKHRAPVVGISIFDQAGSPVDQLNAGENGSPPHRVLIASEEQFKVFSLPQLKPINKYKLTANEGARIRRIHFGSFSCRISPETLQSMHGCSPTKSTRSHGDGEADPNISGSLAVSRGDVYNETALICLTNMGDIMVLSVPELKRQLNAAAVRREDINGVSSLCFTNSGEALYMMSSSELQRIALATSRVVQPTGVVPVEPLENEESVLEENDAENNKETYACDEVVNTYEIKNPSGISICTRPAEENVGRNSVQQVNGVNISNSPNQANETISSSIGDITVDSVRDHLNMTTTTLCSINTEETIGRLSVLSTQTNKASTTVNMSEIPNINISNLEDLESKRNTTETSTSSVVIKSIITNISHEKTNGDNKIGTPKTAPEESQF</sequence>